<proteinExistence type="inferred from homology"/>
<gene>
    <name evidence="1" type="primary">oppB</name>
    <name type="ordered locus">BQ2027_MB1314C</name>
</gene>
<comment type="function">
    <text evidence="1">Part of the ABC transporter complex OppABCD involved in the uptake of oligopeptides (By similarity). Responsible for the translocation of the substrate across the membrane (By similarity).</text>
</comment>
<comment type="subunit">
    <text evidence="1">The complex is composed of an ATP-binding protein (OppD), two transmembrane proteins (OppB and OppC) and a solute-binding protein (OppA).</text>
</comment>
<comment type="subcellular location">
    <subcellularLocation>
        <location evidence="1">Cell inner membrane</location>
        <topology evidence="1">Multi-pass membrane protein</topology>
    </subcellularLocation>
</comment>
<comment type="similarity">
    <text evidence="4">Belongs to the binding-protein-dependent transport system permease family. OppBC subfamily.</text>
</comment>
<organism>
    <name type="scientific">Mycobacterium bovis (strain ATCC BAA-935 / AF2122/97)</name>
    <dbReference type="NCBI Taxonomy" id="233413"/>
    <lineage>
        <taxon>Bacteria</taxon>
        <taxon>Bacillati</taxon>
        <taxon>Actinomycetota</taxon>
        <taxon>Actinomycetes</taxon>
        <taxon>Mycobacteriales</taxon>
        <taxon>Mycobacteriaceae</taxon>
        <taxon>Mycobacterium</taxon>
        <taxon>Mycobacterium tuberculosis complex</taxon>
    </lineage>
</organism>
<evidence type="ECO:0000250" key="1">
    <source>
        <dbReference type="UniProtKB" id="P9WFZ7"/>
    </source>
</evidence>
<evidence type="ECO:0000255" key="2"/>
<evidence type="ECO:0000255" key="3">
    <source>
        <dbReference type="PROSITE-ProRule" id="PRU00441"/>
    </source>
</evidence>
<evidence type="ECO:0000305" key="4"/>
<accession>P66967</accession>
<accession>A0A1R3XXW5</accession>
<accession>Q10611</accession>
<accession>X2BHI0</accession>
<keyword id="KW-0997">Cell inner membrane</keyword>
<keyword id="KW-1003">Cell membrane</keyword>
<keyword id="KW-0472">Membrane</keyword>
<keyword id="KW-0571">Peptide transport</keyword>
<keyword id="KW-0653">Protein transport</keyword>
<keyword id="KW-1185">Reference proteome</keyword>
<keyword id="KW-0812">Transmembrane</keyword>
<keyword id="KW-1133">Transmembrane helix</keyword>
<keyword id="KW-0813">Transport</keyword>
<sequence>MTRYLARRLLNYLVLLALASFLTYCLTSLAFSPLESLMQRSPRPPQAVIDAKAHDLGLDRPILARYANWVSHAVRGDFGTTITGQPVGTELGRRIGVSLRLLVVGSVFGTVAGVVIGAWGAIRQYRLSDRVMTTLALLVLSTPTFVVANLLILGALRVNWAVGIQLFDYTGETSPGVAGGVWDRLGDRLQHLILPSLTLALAAAAGFSRYQRNAMLDVLGQDFIRTARAKGLTRRRALLKHGLRTALIPMATLFAYGVAGLVTGAVFVEKIFGWHGMGEWMVRGISTQDTNIVAAITVFSGAVVLLAGLLSDVIYAALDPRVRVS</sequence>
<reference key="1">
    <citation type="journal article" date="2003" name="Proc. Natl. Acad. Sci. U.S.A.">
        <title>The complete genome sequence of Mycobacterium bovis.</title>
        <authorList>
            <person name="Garnier T."/>
            <person name="Eiglmeier K."/>
            <person name="Camus J.-C."/>
            <person name="Medina N."/>
            <person name="Mansoor H."/>
            <person name="Pryor M."/>
            <person name="Duthoy S."/>
            <person name="Grondin S."/>
            <person name="Lacroix C."/>
            <person name="Monsempe C."/>
            <person name="Simon S."/>
            <person name="Harris B."/>
            <person name="Atkin R."/>
            <person name="Doggett J."/>
            <person name="Mayes R."/>
            <person name="Keating L."/>
            <person name="Wheeler P.R."/>
            <person name="Parkhill J."/>
            <person name="Barrell B.G."/>
            <person name="Cole S.T."/>
            <person name="Gordon S.V."/>
            <person name="Hewinson R.G."/>
        </authorList>
    </citation>
    <scope>NUCLEOTIDE SEQUENCE [LARGE SCALE GENOMIC DNA]</scope>
    <source>
        <strain>ATCC BAA-935 / AF2122/97</strain>
    </source>
</reference>
<reference key="2">
    <citation type="journal article" date="2017" name="Genome Announc.">
        <title>Updated reference genome sequence and annotation of Mycobacterium bovis AF2122/97.</title>
        <authorList>
            <person name="Malone K.M."/>
            <person name="Farrell D."/>
            <person name="Stuber T.P."/>
            <person name="Schubert O.T."/>
            <person name="Aebersold R."/>
            <person name="Robbe-Austerman S."/>
            <person name="Gordon S.V."/>
        </authorList>
    </citation>
    <scope>NUCLEOTIDE SEQUENCE [LARGE SCALE GENOMIC DNA]</scope>
    <scope>GENOME REANNOTATION</scope>
    <source>
        <strain>ATCC BAA-935 / AF2122/97</strain>
    </source>
</reference>
<feature type="chain" id="PRO_0000060292" description="Oligopeptide transport system permease protein OppB">
    <location>
        <begin position="1"/>
        <end position="325"/>
    </location>
</feature>
<feature type="transmembrane region" description="Helical" evidence="2">
    <location>
        <begin position="12"/>
        <end position="32"/>
    </location>
</feature>
<feature type="transmembrane region" description="Helical" evidence="2">
    <location>
        <begin position="102"/>
        <end position="122"/>
    </location>
</feature>
<feature type="transmembrane region" description="Helical" evidence="2">
    <location>
        <begin position="135"/>
        <end position="155"/>
    </location>
</feature>
<feature type="transmembrane region" description="Helical" evidence="2">
    <location>
        <begin position="189"/>
        <end position="208"/>
    </location>
</feature>
<feature type="transmembrane region" description="Helical" evidence="2">
    <location>
        <begin position="248"/>
        <end position="268"/>
    </location>
</feature>
<feature type="transmembrane region" description="Helical" evidence="2">
    <location>
        <begin position="290"/>
        <end position="310"/>
    </location>
</feature>
<feature type="domain" description="ABC transmembrane type-1" evidence="3">
    <location>
        <begin position="95"/>
        <end position="311"/>
    </location>
</feature>
<name>OPPB_MYCBO</name>
<dbReference type="EMBL" id="LT708304">
    <property type="protein sequence ID" value="SIT99917.1"/>
    <property type="molecule type" value="Genomic_DNA"/>
</dbReference>
<dbReference type="RefSeq" id="NP_854968.1">
    <property type="nucleotide sequence ID" value="NC_002945.3"/>
</dbReference>
<dbReference type="RefSeq" id="WP_003406613.1">
    <property type="nucleotide sequence ID" value="NC_002945.4"/>
</dbReference>
<dbReference type="SMR" id="P66967"/>
<dbReference type="KEGG" id="mbo:BQ2027_MB1314C"/>
<dbReference type="PATRIC" id="fig|233413.5.peg.1439"/>
<dbReference type="Proteomes" id="UP000001419">
    <property type="component" value="Chromosome"/>
</dbReference>
<dbReference type="GO" id="GO:0005886">
    <property type="term" value="C:plasma membrane"/>
    <property type="evidence" value="ECO:0007669"/>
    <property type="project" value="UniProtKB-SubCell"/>
</dbReference>
<dbReference type="GO" id="GO:0015833">
    <property type="term" value="P:peptide transport"/>
    <property type="evidence" value="ECO:0007669"/>
    <property type="project" value="UniProtKB-KW"/>
</dbReference>
<dbReference type="GO" id="GO:0015031">
    <property type="term" value="P:protein transport"/>
    <property type="evidence" value="ECO:0007669"/>
    <property type="project" value="UniProtKB-KW"/>
</dbReference>
<dbReference type="GO" id="GO:0055085">
    <property type="term" value="P:transmembrane transport"/>
    <property type="evidence" value="ECO:0007669"/>
    <property type="project" value="InterPro"/>
</dbReference>
<dbReference type="CDD" id="cd06261">
    <property type="entry name" value="TM_PBP2"/>
    <property type="match status" value="1"/>
</dbReference>
<dbReference type="FunFam" id="1.10.3720.10:FF:000111">
    <property type="entry name" value="Peptide ABC transporter permease protein"/>
    <property type="match status" value="1"/>
</dbReference>
<dbReference type="Gene3D" id="1.10.3720.10">
    <property type="entry name" value="MetI-like"/>
    <property type="match status" value="1"/>
</dbReference>
<dbReference type="InterPro" id="IPR045621">
    <property type="entry name" value="BPD_transp_1_N"/>
</dbReference>
<dbReference type="InterPro" id="IPR000515">
    <property type="entry name" value="MetI-like"/>
</dbReference>
<dbReference type="InterPro" id="IPR035906">
    <property type="entry name" value="MetI-like_sf"/>
</dbReference>
<dbReference type="PANTHER" id="PTHR43163">
    <property type="entry name" value="DIPEPTIDE TRANSPORT SYSTEM PERMEASE PROTEIN DPPB-RELATED"/>
    <property type="match status" value="1"/>
</dbReference>
<dbReference type="PANTHER" id="PTHR43163:SF7">
    <property type="entry name" value="DIPEPTIDE-TRANSPORT INTEGRAL MEMBRANE PROTEIN ABC TRANSPORTER DPPB-RELATED"/>
    <property type="match status" value="1"/>
</dbReference>
<dbReference type="Pfam" id="PF00528">
    <property type="entry name" value="BPD_transp_1"/>
    <property type="match status" value="1"/>
</dbReference>
<dbReference type="Pfam" id="PF19300">
    <property type="entry name" value="BPD_transp_1_N"/>
    <property type="match status" value="1"/>
</dbReference>
<dbReference type="SUPFAM" id="SSF161098">
    <property type="entry name" value="MetI-like"/>
    <property type="match status" value="1"/>
</dbReference>
<dbReference type="PROSITE" id="PS50928">
    <property type="entry name" value="ABC_TM1"/>
    <property type="match status" value="1"/>
</dbReference>
<protein>
    <recommendedName>
        <fullName evidence="1">Oligopeptide transport system permease protein OppB</fullName>
    </recommendedName>
</protein>